<name>SKI8_DICDI</name>
<sequence>MFQFGKKITGAHEDGIWCVKWQGDIIATGGMGTKVKTWHGNQPQFLTERKVFDKHILGVTSLDIDIGARYLATGGMDGTVRLFDLSTNTLHKTIDSGPLGCLKIGFLNSANNLVSVSESGNISIYSVETGEKLRSISNTNKQVLTMAISPNNEQIAVAGLDGTVLCYDVESGRRVSEIKAHGVPIRSLCFSSDSKTIFTGAEDSQIRLHDPNSSNPYIASLLGHSSFIFSLVASSNGDLLASSGSIDRKVCIWDIKTRKLDSSFTAHADQTWDLAFSPDSTKLVSVSDDCSIHSYALKQ</sequence>
<reference key="1">
    <citation type="journal article" date="2005" name="Nature">
        <title>The genome of the social amoeba Dictyostelium discoideum.</title>
        <authorList>
            <person name="Eichinger L."/>
            <person name="Pachebat J.A."/>
            <person name="Gloeckner G."/>
            <person name="Rajandream M.A."/>
            <person name="Sucgang R."/>
            <person name="Berriman M."/>
            <person name="Song J."/>
            <person name="Olsen R."/>
            <person name="Szafranski K."/>
            <person name="Xu Q."/>
            <person name="Tunggal B."/>
            <person name="Kummerfeld S."/>
            <person name="Madera M."/>
            <person name="Konfortov B.A."/>
            <person name="Rivero F."/>
            <person name="Bankier A.T."/>
            <person name="Lehmann R."/>
            <person name="Hamlin N."/>
            <person name="Davies R."/>
            <person name="Gaudet P."/>
            <person name="Fey P."/>
            <person name="Pilcher K."/>
            <person name="Chen G."/>
            <person name="Saunders D."/>
            <person name="Sodergren E.J."/>
            <person name="Davis P."/>
            <person name="Kerhornou A."/>
            <person name="Nie X."/>
            <person name="Hall N."/>
            <person name="Anjard C."/>
            <person name="Hemphill L."/>
            <person name="Bason N."/>
            <person name="Farbrother P."/>
            <person name="Desany B."/>
            <person name="Just E."/>
            <person name="Morio T."/>
            <person name="Rost R."/>
            <person name="Churcher C.M."/>
            <person name="Cooper J."/>
            <person name="Haydock S."/>
            <person name="van Driessche N."/>
            <person name="Cronin A."/>
            <person name="Goodhead I."/>
            <person name="Muzny D.M."/>
            <person name="Mourier T."/>
            <person name="Pain A."/>
            <person name="Lu M."/>
            <person name="Harper D."/>
            <person name="Lindsay R."/>
            <person name="Hauser H."/>
            <person name="James K.D."/>
            <person name="Quiles M."/>
            <person name="Madan Babu M."/>
            <person name="Saito T."/>
            <person name="Buchrieser C."/>
            <person name="Wardroper A."/>
            <person name="Felder M."/>
            <person name="Thangavelu M."/>
            <person name="Johnson D."/>
            <person name="Knights A."/>
            <person name="Loulseged H."/>
            <person name="Mungall K.L."/>
            <person name="Oliver K."/>
            <person name="Price C."/>
            <person name="Quail M.A."/>
            <person name="Urushihara H."/>
            <person name="Hernandez J."/>
            <person name="Rabbinowitsch E."/>
            <person name="Steffen D."/>
            <person name="Sanders M."/>
            <person name="Ma J."/>
            <person name="Kohara Y."/>
            <person name="Sharp S."/>
            <person name="Simmonds M.N."/>
            <person name="Spiegler S."/>
            <person name="Tivey A."/>
            <person name="Sugano S."/>
            <person name="White B."/>
            <person name="Walker D."/>
            <person name="Woodward J.R."/>
            <person name="Winckler T."/>
            <person name="Tanaka Y."/>
            <person name="Shaulsky G."/>
            <person name="Schleicher M."/>
            <person name="Weinstock G.M."/>
            <person name="Rosenthal A."/>
            <person name="Cox E.C."/>
            <person name="Chisholm R.L."/>
            <person name="Gibbs R.A."/>
            <person name="Loomis W.F."/>
            <person name="Platzer M."/>
            <person name="Kay R.R."/>
            <person name="Williams J.G."/>
            <person name="Dear P.H."/>
            <person name="Noegel A.A."/>
            <person name="Barrell B.G."/>
            <person name="Kuspa A."/>
        </authorList>
    </citation>
    <scope>NUCLEOTIDE SEQUENCE [LARGE SCALE GENOMIC DNA]</scope>
    <source>
        <strain>AX4</strain>
    </source>
</reference>
<protein>
    <recommendedName>
        <fullName>Superkiller complex protein 8</fullName>
        <shortName>Ski8</shortName>
    </recommendedName>
    <alternativeName>
        <fullName>WD repeat-containing protein 61 homolog</fullName>
    </alternativeName>
</protein>
<comment type="similarity">
    <text evidence="1">Belongs to the SKI8 family.</text>
</comment>
<gene>
    <name type="primary">skic8</name>
    <name type="synonym">wdr61</name>
    <name type="ORF">DDB_G0282793</name>
</gene>
<keyword id="KW-1185">Reference proteome</keyword>
<keyword id="KW-0677">Repeat</keyword>
<keyword id="KW-0853">WD repeat</keyword>
<dbReference type="EMBL" id="AAFI02000047">
    <property type="protein sequence ID" value="EAL66256.1"/>
    <property type="molecule type" value="Genomic_DNA"/>
</dbReference>
<dbReference type="RefSeq" id="XP_640180.1">
    <property type="nucleotide sequence ID" value="XM_635088.1"/>
</dbReference>
<dbReference type="SMR" id="Q54S59"/>
<dbReference type="STRING" id="44689.Q54S59"/>
<dbReference type="PaxDb" id="44689-DDB0267163"/>
<dbReference type="EnsemblProtists" id="EAL66256">
    <property type="protein sequence ID" value="EAL66256"/>
    <property type="gene ID" value="DDB_G0282793"/>
</dbReference>
<dbReference type="GeneID" id="8623719"/>
<dbReference type="KEGG" id="ddi:DDB_G0282793"/>
<dbReference type="dictyBase" id="DDB_G0282793">
    <property type="gene designation" value="wdr61"/>
</dbReference>
<dbReference type="VEuPathDB" id="AmoebaDB:DDB_G0282793"/>
<dbReference type="eggNOG" id="KOG4155">
    <property type="taxonomic scope" value="Eukaryota"/>
</dbReference>
<dbReference type="HOGENOM" id="CLU_000288_57_11_1"/>
<dbReference type="InParanoid" id="Q54S59"/>
<dbReference type="OMA" id="LDSSMCL"/>
<dbReference type="PhylomeDB" id="Q54S59"/>
<dbReference type="Reactome" id="R-DDI-429958">
    <property type="pathway name" value="mRNA decay by 3' to 5' exoribonuclease"/>
</dbReference>
<dbReference type="PRO" id="PR:Q54S59"/>
<dbReference type="Proteomes" id="UP000002195">
    <property type="component" value="Chromosome 3"/>
</dbReference>
<dbReference type="GO" id="GO:0016593">
    <property type="term" value="C:Cdc73/Paf1 complex"/>
    <property type="evidence" value="ECO:0000318"/>
    <property type="project" value="GO_Central"/>
</dbReference>
<dbReference type="CDD" id="cd00200">
    <property type="entry name" value="WD40"/>
    <property type="match status" value="1"/>
</dbReference>
<dbReference type="Gene3D" id="2.130.10.10">
    <property type="entry name" value="YVTN repeat-like/Quinoprotein amine dehydrogenase"/>
    <property type="match status" value="1"/>
</dbReference>
<dbReference type="InterPro" id="IPR051510">
    <property type="entry name" value="SKI8"/>
</dbReference>
<dbReference type="InterPro" id="IPR015943">
    <property type="entry name" value="WD40/YVTN_repeat-like_dom_sf"/>
</dbReference>
<dbReference type="InterPro" id="IPR019775">
    <property type="entry name" value="WD40_repeat_CS"/>
</dbReference>
<dbReference type="InterPro" id="IPR036322">
    <property type="entry name" value="WD40_repeat_dom_sf"/>
</dbReference>
<dbReference type="InterPro" id="IPR001680">
    <property type="entry name" value="WD40_rpt"/>
</dbReference>
<dbReference type="PANTHER" id="PTHR44090:SF1">
    <property type="entry name" value="SUPERKILLER COMPLEX PROTEIN 8"/>
    <property type="match status" value="1"/>
</dbReference>
<dbReference type="PANTHER" id="PTHR44090">
    <property type="entry name" value="WD REPEAT-CONTAINING PROTEIN 61"/>
    <property type="match status" value="1"/>
</dbReference>
<dbReference type="Pfam" id="PF00400">
    <property type="entry name" value="WD40"/>
    <property type="match status" value="6"/>
</dbReference>
<dbReference type="SMART" id="SM00320">
    <property type="entry name" value="WD40"/>
    <property type="match status" value="7"/>
</dbReference>
<dbReference type="SUPFAM" id="SSF50978">
    <property type="entry name" value="WD40 repeat-like"/>
    <property type="match status" value="1"/>
</dbReference>
<dbReference type="PROSITE" id="PS00678">
    <property type="entry name" value="WD_REPEATS_1"/>
    <property type="match status" value="1"/>
</dbReference>
<dbReference type="PROSITE" id="PS50082">
    <property type="entry name" value="WD_REPEATS_2"/>
    <property type="match status" value="5"/>
</dbReference>
<dbReference type="PROSITE" id="PS50294">
    <property type="entry name" value="WD_REPEATS_REGION"/>
    <property type="match status" value="1"/>
</dbReference>
<evidence type="ECO:0000305" key="1"/>
<proteinExistence type="inferred from homology"/>
<feature type="chain" id="PRO_0000328583" description="Superkiller complex protein 8">
    <location>
        <begin position="1"/>
        <end position="299"/>
    </location>
</feature>
<feature type="repeat" description="WD 1">
    <location>
        <begin position="11"/>
        <end position="48"/>
    </location>
</feature>
<feature type="repeat" description="WD 2">
    <location>
        <begin position="54"/>
        <end position="93"/>
    </location>
</feature>
<feature type="repeat" description="WD 3">
    <location>
        <begin position="96"/>
        <end position="135"/>
    </location>
</feature>
<feature type="repeat" description="WD 4">
    <location>
        <begin position="138"/>
        <end position="177"/>
    </location>
</feature>
<feature type="repeat" description="WD 5">
    <location>
        <begin position="180"/>
        <end position="219"/>
    </location>
</feature>
<feature type="repeat" description="WD 6">
    <location>
        <begin position="223"/>
        <end position="263"/>
    </location>
</feature>
<feature type="repeat" description="WD 7">
    <location>
        <begin position="266"/>
        <end position="299"/>
    </location>
</feature>
<organism>
    <name type="scientific">Dictyostelium discoideum</name>
    <name type="common">Social amoeba</name>
    <dbReference type="NCBI Taxonomy" id="44689"/>
    <lineage>
        <taxon>Eukaryota</taxon>
        <taxon>Amoebozoa</taxon>
        <taxon>Evosea</taxon>
        <taxon>Eumycetozoa</taxon>
        <taxon>Dictyostelia</taxon>
        <taxon>Dictyosteliales</taxon>
        <taxon>Dictyosteliaceae</taxon>
        <taxon>Dictyostelium</taxon>
    </lineage>
</organism>
<accession>Q54S59</accession>